<sequence length="205" mass="24140">MSVDPMTYEAQFFGFTPQTCMLRIYIAFQDYLFEVMQAVEQVILKKLDGIPDCDISPVQIRKCTEKFLCFMKGHFDNLFSKMEQLFLQLILRIPSNILLPEDKCKETPYSEEDFQHLQKEIEQLQEKYKTELCTKQALLAELEEQKIVQAKLKQTLTFFDELHNVGRDHGTSDFRESLVSLVQNSRKLQNIRDNVEKESKRLKIS</sequence>
<accession>Q5R9W0</accession>
<feature type="chain" id="PRO_0000297536" description="Protein MIS12 homolog">
    <location>
        <begin position="1"/>
        <end position="205"/>
    </location>
</feature>
<feature type="coiled-coil region" evidence="2">
    <location>
        <begin position="108"/>
        <end position="205"/>
    </location>
</feature>
<dbReference type="EMBL" id="CR859272">
    <property type="protein sequence ID" value="CAH91450.1"/>
    <property type="molecule type" value="mRNA"/>
</dbReference>
<dbReference type="RefSeq" id="NP_001128987.1">
    <property type="nucleotide sequence ID" value="NM_001135515.2"/>
</dbReference>
<dbReference type="RefSeq" id="XP_009249460.1">
    <property type="nucleotide sequence ID" value="XM_009251185.4"/>
</dbReference>
<dbReference type="RefSeq" id="XP_009249461.1">
    <property type="nucleotide sequence ID" value="XM_009251186.1"/>
</dbReference>
<dbReference type="RefSeq" id="XP_024090070.1">
    <property type="nucleotide sequence ID" value="XM_024234302.3"/>
</dbReference>
<dbReference type="SMR" id="Q5R9W0"/>
<dbReference type="FunCoup" id="Q5R9W0">
    <property type="interactions" value="2225"/>
</dbReference>
<dbReference type="STRING" id="9601.ENSPPYP00000008862"/>
<dbReference type="Ensembl" id="ENSPPYT00000009225.2">
    <property type="protein sequence ID" value="ENSPPYP00000008862.1"/>
    <property type="gene ID" value="ENSPPYG00000007873.2"/>
</dbReference>
<dbReference type="GeneID" id="100190827"/>
<dbReference type="KEGG" id="pon:100190827"/>
<dbReference type="CTD" id="79003"/>
<dbReference type="eggNOG" id="ENOG502RXZ1">
    <property type="taxonomic scope" value="Eukaryota"/>
</dbReference>
<dbReference type="GeneTree" id="ENSGT00390000018665"/>
<dbReference type="HOGENOM" id="CLU_097032_0_0_1"/>
<dbReference type="InParanoid" id="Q5R9W0"/>
<dbReference type="OMA" id="DYLFEMM"/>
<dbReference type="OrthoDB" id="1884855at2759"/>
<dbReference type="TreeFam" id="TF101136"/>
<dbReference type="Proteomes" id="UP000001595">
    <property type="component" value="Chromosome 17"/>
</dbReference>
<dbReference type="GO" id="GO:0000444">
    <property type="term" value="C:MIS12/MIND type complex"/>
    <property type="evidence" value="ECO:0000250"/>
    <property type="project" value="UniProtKB"/>
</dbReference>
<dbReference type="GO" id="GO:0005634">
    <property type="term" value="C:nucleus"/>
    <property type="evidence" value="ECO:0007669"/>
    <property type="project" value="Ensembl"/>
</dbReference>
<dbReference type="GO" id="GO:0051315">
    <property type="term" value="P:attachment of mitotic spindle microtubules to kinetochore"/>
    <property type="evidence" value="ECO:0000250"/>
    <property type="project" value="UniProtKB"/>
</dbReference>
<dbReference type="GO" id="GO:0051301">
    <property type="term" value="P:cell division"/>
    <property type="evidence" value="ECO:0007669"/>
    <property type="project" value="UniProtKB-KW"/>
</dbReference>
<dbReference type="GO" id="GO:0051382">
    <property type="term" value="P:kinetochore assembly"/>
    <property type="evidence" value="ECO:0007669"/>
    <property type="project" value="Ensembl"/>
</dbReference>
<dbReference type="InterPro" id="IPR008685">
    <property type="entry name" value="Centromere_Mis12"/>
</dbReference>
<dbReference type="PANTHER" id="PTHR14527">
    <property type="entry name" value="PROTEIN MIS12 HOMOLOG"/>
    <property type="match status" value="1"/>
</dbReference>
<dbReference type="PANTHER" id="PTHR14527:SF2">
    <property type="entry name" value="PROTEIN MIS12 HOMOLOG"/>
    <property type="match status" value="1"/>
</dbReference>
<dbReference type="Pfam" id="PF05859">
    <property type="entry name" value="Mis12"/>
    <property type="match status" value="1"/>
</dbReference>
<comment type="function">
    <text evidence="1">Part of the MIS12 complex which is required for normal chromosome alignment and segregation and for kinetochore formation during mitosis. Essential for proper kinetochore microtubule attachments.</text>
</comment>
<comment type="subunit">
    <text evidence="1">Component of the MIS12 complex composed of MIS12, DSN1, NSL1 and PMF1. Also interacts with KNL1, CBX3, CBX5, NDC80 and ZWINT.</text>
</comment>
<comment type="subcellular location">
    <subcellularLocation>
        <location evidence="1">Chromosome</location>
        <location evidence="1">Centromere</location>
        <location evidence="1">Kinetochore</location>
    </subcellularLocation>
    <text evidence="1">Associated with the kinetochore.</text>
</comment>
<comment type="similarity">
    <text evidence="3">Belongs to the mis12 family.</text>
</comment>
<reference key="1">
    <citation type="submission" date="2004-11" db="EMBL/GenBank/DDBJ databases">
        <authorList>
            <consortium name="The German cDNA consortium"/>
        </authorList>
    </citation>
    <scope>NUCLEOTIDE SEQUENCE [LARGE SCALE MRNA]</scope>
    <source>
        <tissue>Heart</tissue>
    </source>
</reference>
<proteinExistence type="evidence at transcript level"/>
<organism>
    <name type="scientific">Pongo abelii</name>
    <name type="common">Sumatran orangutan</name>
    <name type="synonym">Pongo pygmaeus abelii</name>
    <dbReference type="NCBI Taxonomy" id="9601"/>
    <lineage>
        <taxon>Eukaryota</taxon>
        <taxon>Metazoa</taxon>
        <taxon>Chordata</taxon>
        <taxon>Craniata</taxon>
        <taxon>Vertebrata</taxon>
        <taxon>Euteleostomi</taxon>
        <taxon>Mammalia</taxon>
        <taxon>Eutheria</taxon>
        <taxon>Euarchontoglires</taxon>
        <taxon>Primates</taxon>
        <taxon>Haplorrhini</taxon>
        <taxon>Catarrhini</taxon>
        <taxon>Hominidae</taxon>
        <taxon>Pongo</taxon>
    </lineage>
</organism>
<keyword id="KW-0131">Cell cycle</keyword>
<keyword id="KW-0132">Cell division</keyword>
<keyword id="KW-0137">Centromere</keyword>
<keyword id="KW-0158">Chromosome</keyword>
<keyword id="KW-0159">Chromosome partition</keyword>
<keyword id="KW-0175">Coiled coil</keyword>
<keyword id="KW-0995">Kinetochore</keyword>
<keyword id="KW-0498">Mitosis</keyword>
<keyword id="KW-1185">Reference proteome</keyword>
<evidence type="ECO:0000250" key="1">
    <source>
        <dbReference type="UniProtKB" id="Q9H081"/>
    </source>
</evidence>
<evidence type="ECO:0000255" key="2"/>
<evidence type="ECO:0000305" key="3"/>
<gene>
    <name type="primary">MIS12</name>
</gene>
<protein>
    <recommendedName>
        <fullName>Protein MIS12 homolog</fullName>
    </recommendedName>
</protein>
<name>MIS12_PONAB</name>